<protein>
    <recommendedName>
        <fullName>Carbamate kinase 2</fullName>
        <ecNumber>2.7.2.2</ecNumber>
    </recommendedName>
</protein>
<sequence>MKEKIVIALGGNAIQTKEATAEAQQTAIRRAMQNLKPLFDSPARIVISHGNGPQIGSLLIQQAKSNSDTTPAMPLDTCGAMSQGMIGYWLETEINRILTEMNSDRTVGTIVTRVEVDKDDPRFNNPTKPIGPFYTKEEVEELQKEQPDSVFKEDAGRGYRKVVASPLPQSILEHQLIRTLADGKNIVIACGGGGIPVIKKENTYEGVEAVIDKDFASEKLATLIEADTLMILTNVENVFINFNEPNQQQIDDIDVATLKKYAAQGKFAEGSMLPKIEAAIRFVESGENKKVIITNLEQAYEALIGNKGTHIHM</sequence>
<reference key="1">
    <citation type="journal article" date="2004" name="Proc. Natl. Acad. Sci. U.S.A.">
        <title>Complete genomes of two clinical Staphylococcus aureus strains: evidence for the rapid evolution of virulence and drug resistance.</title>
        <authorList>
            <person name="Holden M.T.G."/>
            <person name="Feil E.J."/>
            <person name="Lindsay J.A."/>
            <person name="Peacock S.J."/>
            <person name="Day N.P.J."/>
            <person name="Enright M.C."/>
            <person name="Foster T.J."/>
            <person name="Moore C.E."/>
            <person name="Hurst L."/>
            <person name="Atkin R."/>
            <person name="Barron A."/>
            <person name="Bason N."/>
            <person name="Bentley S.D."/>
            <person name="Chillingworth C."/>
            <person name="Chillingworth T."/>
            <person name="Churcher C."/>
            <person name="Clark L."/>
            <person name="Corton C."/>
            <person name="Cronin A."/>
            <person name="Doggett J."/>
            <person name="Dowd L."/>
            <person name="Feltwell T."/>
            <person name="Hance Z."/>
            <person name="Harris B."/>
            <person name="Hauser H."/>
            <person name="Holroyd S."/>
            <person name="Jagels K."/>
            <person name="James K.D."/>
            <person name="Lennard N."/>
            <person name="Line A."/>
            <person name="Mayes R."/>
            <person name="Moule S."/>
            <person name="Mungall K."/>
            <person name="Ormond D."/>
            <person name="Quail M.A."/>
            <person name="Rabbinowitsch E."/>
            <person name="Rutherford K.M."/>
            <person name="Sanders M."/>
            <person name="Sharp S."/>
            <person name="Simmonds M."/>
            <person name="Stevens K."/>
            <person name="Whitehead S."/>
            <person name="Barrell B.G."/>
            <person name="Spratt B.G."/>
            <person name="Parkhill J."/>
        </authorList>
    </citation>
    <scope>NUCLEOTIDE SEQUENCE [LARGE SCALE GENOMIC DNA]</scope>
    <source>
        <strain>MSSA476</strain>
    </source>
</reference>
<keyword id="KW-0056">Arginine metabolism</keyword>
<keyword id="KW-0067">ATP-binding</keyword>
<keyword id="KW-0963">Cytoplasm</keyword>
<keyword id="KW-0418">Kinase</keyword>
<keyword id="KW-0547">Nucleotide-binding</keyword>
<keyword id="KW-0808">Transferase</keyword>
<feature type="chain" id="PRO_0000185136" description="Carbamate kinase 2">
    <location>
        <begin position="1"/>
        <end position="313"/>
    </location>
</feature>
<gene>
    <name type="primary">arcC2</name>
    <name type="ordered locus">SAS2518</name>
</gene>
<organism>
    <name type="scientific">Staphylococcus aureus (strain MSSA476)</name>
    <dbReference type="NCBI Taxonomy" id="282459"/>
    <lineage>
        <taxon>Bacteria</taxon>
        <taxon>Bacillati</taxon>
        <taxon>Bacillota</taxon>
        <taxon>Bacilli</taxon>
        <taxon>Bacillales</taxon>
        <taxon>Staphylococcaceae</taxon>
        <taxon>Staphylococcus</taxon>
    </lineage>
</organism>
<evidence type="ECO:0000305" key="1"/>
<name>ARCC2_STAAS</name>
<comment type="catalytic activity">
    <reaction>
        <text>hydrogencarbonate + NH4(+) + ATP = carbamoyl phosphate + ADP + H2O + H(+)</text>
        <dbReference type="Rhea" id="RHEA:10152"/>
        <dbReference type="ChEBI" id="CHEBI:15377"/>
        <dbReference type="ChEBI" id="CHEBI:15378"/>
        <dbReference type="ChEBI" id="CHEBI:17544"/>
        <dbReference type="ChEBI" id="CHEBI:28938"/>
        <dbReference type="ChEBI" id="CHEBI:30616"/>
        <dbReference type="ChEBI" id="CHEBI:58228"/>
        <dbReference type="ChEBI" id="CHEBI:456216"/>
        <dbReference type="EC" id="2.7.2.2"/>
    </reaction>
</comment>
<comment type="pathway">
    <text>Metabolic intermediate metabolism; carbamoyl phosphate degradation; CO(2) and NH(3) from carbamoyl phosphate: step 1/1.</text>
</comment>
<comment type="subcellular location">
    <subcellularLocation>
        <location evidence="1">Cytoplasm</location>
    </subcellularLocation>
</comment>
<comment type="similarity">
    <text evidence="1">Belongs to the carbamate kinase family.</text>
</comment>
<comment type="sequence caution" evidence="1">
    <conflict type="erroneous initiation">
        <sequence resource="EMBL-CDS" id="CAG44335"/>
    </conflict>
</comment>
<accession>Q6G642</accession>
<dbReference type="EC" id="2.7.2.2"/>
<dbReference type="EMBL" id="BX571857">
    <property type="protein sequence ID" value="CAG44335.1"/>
    <property type="status" value="ALT_INIT"/>
    <property type="molecule type" value="Genomic_DNA"/>
</dbReference>
<dbReference type="SMR" id="Q6G642"/>
<dbReference type="KEGG" id="sas:SAS2518"/>
<dbReference type="HOGENOM" id="CLU_076278_0_0_9"/>
<dbReference type="UniPathway" id="UPA00996">
    <property type="reaction ID" value="UER00366"/>
</dbReference>
<dbReference type="GO" id="GO:0005829">
    <property type="term" value="C:cytosol"/>
    <property type="evidence" value="ECO:0007669"/>
    <property type="project" value="TreeGrafter"/>
</dbReference>
<dbReference type="GO" id="GO:0005524">
    <property type="term" value="F:ATP binding"/>
    <property type="evidence" value="ECO:0007669"/>
    <property type="project" value="UniProtKB-KW"/>
</dbReference>
<dbReference type="GO" id="GO:0008804">
    <property type="term" value="F:carbamate kinase activity"/>
    <property type="evidence" value="ECO:0007669"/>
    <property type="project" value="UniProtKB-EC"/>
</dbReference>
<dbReference type="GO" id="GO:0019546">
    <property type="term" value="P:arginine deiminase pathway"/>
    <property type="evidence" value="ECO:0007669"/>
    <property type="project" value="TreeGrafter"/>
</dbReference>
<dbReference type="CDD" id="cd04235">
    <property type="entry name" value="AAK_CK"/>
    <property type="match status" value="1"/>
</dbReference>
<dbReference type="FunFam" id="3.40.1160.10:FF:000007">
    <property type="entry name" value="Carbamate kinase"/>
    <property type="match status" value="1"/>
</dbReference>
<dbReference type="Gene3D" id="3.40.1160.10">
    <property type="entry name" value="Acetylglutamate kinase-like"/>
    <property type="match status" value="1"/>
</dbReference>
<dbReference type="InterPro" id="IPR036393">
    <property type="entry name" value="AceGlu_kinase-like_sf"/>
</dbReference>
<dbReference type="InterPro" id="IPR001048">
    <property type="entry name" value="Asp/Glu/Uridylate_kinase"/>
</dbReference>
<dbReference type="InterPro" id="IPR003964">
    <property type="entry name" value="Carb_kinase"/>
</dbReference>
<dbReference type="NCBIfam" id="TIGR00746">
    <property type="entry name" value="arcC"/>
    <property type="match status" value="1"/>
</dbReference>
<dbReference type="NCBIfam" id="NF009007">
    <property type="entry name" value="PRK12352.1"/>
    <property type="match status" value="1"/>
</dbReference>
<dbReference type="PANTHER" id="PTHR30409">
    <property type="entry name" value="CARBAMATE KINASE"/>
    <property type="match status" value="1"/>
</dbReference>
<dbReference type="PANTHER" id="PTHR30409:SF1">
    <property type="entry name" value="CARBAMATE KINASE-RELATED"/>
    <property type="match status" value="1"/>
</dbReference>
<dbReference type="Pfam" id="PF00696">
    <property type="entry name" value="AA_kinase"/>
    <property type="match status" value="1"/>
</dbReference>
<dbReference type="PIRSF" id="PIRSF000723">
    <property type="entry name" value="Carbamate_kin"/>
    <property type="match status" value="1"/>
</dbReference>
<dbReference type="PRINTS" id="PR01469">
    <property type="entry name" value="CARBMTKINASE"/>
</dbReference>
<dbReference type="SUPFAM" id="SSF53633">
    <property type="entry name" value="Carbamate kinase-like"/>
    <property type="match status" value="1"/>
</dbReference>
<proteinExistence type="inferred from homology"/>